<name>Y102_CITBB</name>
<keyword id="KW-1185">Reference proteome</keyword>
<proteinExistence type="inferred from homology"/>
<protein>
    <recommendedName>
        <fullName evidence="1">UPF0502 protein Gbem_0102</fullName>
    </recommendedName>
</protein>
<organism>
    <name type="scientific">Citrifermentans bemidjiense (strain ATCC BAA-1014 / DSM 16622 / JCM 12645 / Bem)</name>
    <name type="common">Geobacter bemidjiensis</name>
    <dbReference type="NCBI Taxonomy" id="404380"/>
    <lineage>
        <taxon>Bacteria</taxon>
        <taxon>Pseudomonadati</taxon>
        <taxon>Thermodesulfobacteriota</taxon>
        <taxon>Desulfuromonadia</taxon>
        <taxon>Geobacterales</taxon>
        <taxon>Geobacteraceae</taxon>
        <taxon>Citrifermentans</taxon>
    </lineage>
</organism>
<accession>B5E8F0</accession>
<evidence type="ECO:0000255" key="1">
    <source>
        <dbReference type="HAMAP-Rule" id="MF_01584"/>
    </source>
</evidence>
<comment type="similarity">
    <text evidence="1">Belongs to the UPF0502 family.</text>
</comment>
<gene>
    <name type="ordered locus">Gbem_0102</name>
</gene>
<reference key="1">
    <citation type="submission" date="2008-07" db="EMBL/GenBank/DDBJ databases">
        <title>Complete sequence of Geobacter bemidjiensis BEM.</title>
        <authorList>
            <consortium name="US DOE Joint Genome Institute"/>
            <person name="Lucas S."/>
            <person name="Copeland A."/>
            <person name="Lapidus A."/>
            <person name="Glavina del Rio T."/>
            <person name="Dalin E."/>
            <person name="Tice H."/>
            <person name="Bruce D."/>
            <person name="Goodwin L."/>
            <person name="Pitluck S."/>
            <person name="Kiss H."/>
            <person name="Brettin T."/>
            <person name="Detter J.C."/>
            <person name="Han C."/>
            <person name="Kuske C.R."/>
            <person name="Schmutz J."/>
            <person name="Larimer F."/>
            <person name="Land M."/>
            <person name="Hauser L."/>
            <person name="Kyrpides N."/>
            <person name="Lykidis A."/>
            <person name="Lovley D."/>
            <person name="Richardson P."/>
        </authorList>
    </citation>
    <scope>NUCLEOTIDE SEQUENCE [LARGE SCALE GENOMIC DNA]</scope>
    <source>
        <strain>ATCC BAA-1014 / DSM 16622 / JCM 12645 / Bem</strain>
    </source>
</reference>
<sequence length="215" mass="23927">MEATLDGTELRVLGSLVEKDLTTPEYYPLSLNALVNACNQKSNRDPVLSLDESQVTRALDTLRFKQYALVSGSGGRVAKYRHALVEKFRFSPAELAILCELMLRGPQTVGELRGRGERMHKFSDLSEVESVLADLAERTPSLVAKLPLQPGRKEPRYCQLFSGEPDLSELAAQMEARGAGADGEKIARLEQELSELREEVASLRETIAEFRKSFE</sequence>
<dbReference type="EMBL" id="CP001124">
    <property type="protein sequence ID" value="ACH37133.1"/>
    <property type="molecule type" value="Genomic_DNA"/>
</dbReference>
<dbReference type="RefSeq" id="WP_012528541.1">
    <property type="nucleotide sequence ID" value="NC_011146.1"/>
</dbReference>
<dbReference type="SMR" id="B5E8F0"/>
<dbReference type="STRING" id="404380.Gbem_0102"/>
<dbReference type="KEGG" id="gbm:Gbem_0102"/>
<dbReference type="eggNOG" id="COG3132">
    <property type="taxonomic scope" value="Bacteria"/>
</dbReference>
<dbReference type="HOGENOM" id="CLU_057831_1_0_7"/>
<dbReference type="OrthoDB" id="9784785at2"/>
<dbReference type="Proteomes" id="UP000008825">
    <property type="component" value="Chromosome"/>
</dbReference>
<dbReference type="Gene3D" id="1.10.10.10">
    <property type="entry name" value="Winged helix-like DNA-binding domain superfamily/Winged helix DNA-binding domain"/>
    <property type="match status" value="2"/>
</dbReference>
<dbReference type="HAMAP" id="MF_01584">
    <property type="entry name" value="UPF0502"/>
    <property type="match status" value="1"/>
</dbReference>
<dbReference type="InterPro" id="IPR007432">
    <property type="entry name" value="DUF480"/>
</dbReference>
<dbReference type="InterPro" id="IPR036388">
    <property type="entry name" value="WH-like_DNA-bd_sf"/>
</dbReference>
<dbReference type="InterPro" id="IPR036390">
    <property type="entry name" value="WH_DNA-bd_sf"/>
</dbReference>
<dbReference type="PANTHER" id="PTHR38768">
    <property type="entry name" value="UPF0502 PROTEIN YCEH"/>
    <property type="match status" value="1"/>
</dbReference>
<dbReference type="PANTHER" id="PTHR38768:SF1">
    <property type="entry name" value="UPF0502 PROTEIN YCEH"/>
    <property type="match status" value="1"/>
</dbReference>
<dbReference type="Pfam" id="PF04337">
    <property type="entry name" value="DUF480"/>
    <property type="match status" value="1"/>
</dbReference>
<dbReference type="SUPFAM" id="SSF46785">
    <property type="entry name" value="Winged helix' DNA-binding domain"/>
    <property type="match status" value="2"/>
</dbReference>
<feature type="chain" id="PRO_0000382559" description="UPF0502 protein Gbem_0102">
    <location>
        <begin position="1"/>
        <end position="215"/>
    </location>
</feature>